<geneLocation type="chloroplast"/>
<keyword id="KW-0150">Chloroplast</keyword>
<keyword id="KW-0507">mRNA processing</keyword>
<keyword id="KW-0934">Plastid</keyword>
<keyword id="KW-0694">RNA-binding</keyword>
<keyword id="KW-0819">tRNA processing</keyword>
<proteinExistence type="inferred from homology"/>
<comment type="function">
    <text evidence="1">Usually encoded in the trnK tRNA gene intron. Probably assists in splicing its own and other chloroplast group II introns.</text>
</comment>
<comment type="subcellular location">
    <subcellularLocation>
        <location>Plastid</location>
        <location>Chloroplast</location>
    </subcellularLocation>
</comment>
<comment type="similarity">
    <text evidence="1">Belongs to the intron maturase 2 family. MatK subfamily.</text>
</comment>
<feature type="chain" id="PRO_0000143772" description="Maturase K">
    <location>
        <begin position="1"/>
        <end position="513"/>
    </location>
</feature>
<evidence type="ECO:0000255" key="1">
    <source>
        <dbReference type="HAMAP-Rule" id="MF_01390"/>
    </source>
</evidence>
<sequence length="513" mass="61692">MKQLHVQRYLEKVRSRKQHFLYPLLFKEYIYAFAHDYGLNGSIFYEPAEIIGNDNKSSSVLVKRLIIRMYQQNYLINSINHSNQNRFIGHNNYFYSHFFSLMISESFAVIMEIPFSLRLVSSPEEKEIPQFQNLRSIHSIFPFLEDKLSHLNYVSDILIPHPIHFEILVQILQCRIQDVPSLHLLRFFLHEYHNWNSLITSKKSIYVFSKENKRLFRLLYNFYVFECEFVFVFLRKQSSYLRLTSFGTFLERIHFYGKIEHLLVVYRNYFNKTLWFFTDPFMHYVRYQGKAILASKGTHLFMKKWKCYLVNFWQYYFHFWSQPHRIHINQLSNYSFHFLGYLSSVLRNLLVVRNQMLENSYLIDTVTKKFDTIVPVIPLIGSLSKAKFCTLLGHPISKPIWTDLSDCDIIDRFGRICRNLSHYYSGSSKKRSLYRIKYILRFSCARTLARKHKSTVRTFLQRLGSVLLEEFFTEEEQVLSLIFPKTTPFSLHGSHRERIWYLDIIRINDLVNH</sequence>
<protein>
    <recommendedName>
        <fullName evidence="1">Maturase K</fullName>
    </recommendedName>
    <alternativeName>
        <fullName evidence="1">Intron maturase</fullName>
    </alternativeName>
</protein>
<organism>
    <name type="scientific">Typha angustifolia</name>
    <name type="common">Narrow leaf cattail</name>
    <dbReference type="NCBI Taxonomy" id="59011"/>
    <lineage>
        <taxon>Eukaryota</taxon>
        <taxon>Viridiplantae</taxon>
        <taxon>Streptophyta</taxon>
        <taxon>Embryophyta</taxon>
        <taxon>Tracheophyta</taxon>
        <taxon>Spermatophyta</taxon>
        <taxon>Magnoliopsida</taxon>
        <taxon>Liliopsida</taxon>
        <taxon>Poales</taxon>
        <taxon>Typhaceae</taxon>
        <taxon>Typha</taxon>
    </lineage>
</organism>
<name>MATK_TYPAN</name>
<reference key="1">
    <citation type="submission" date="2005-03" db="EMBL/GenBank/DDBJ databases">
        <title>Monocotyledons phylogeny based on three genes (matK, rbcL and 18S rDNA) sequences.</title>
        <authorList>
            <person name="Li X.X."/>
            <person name="Zhou Z.K."/>
        </authorList>
    </citation>
    <scope>NUCLEOTIDE SEQUENCE [GENOMIC DNA]</scope>
</reference>
<accession>Q52TG6</accession>
<gene>
    <name evidence="1" type="primary">matK</name>
</gene>
<dbReference type="EMBL" id="AY952419">
    <property type="protein sequence ID" value="AAX84501.1"/>
    <property type="molecule type" value="Genomic_DNA"/>
</dbReference>
<dbReference type="GO" id="GO:0009507">
    <property type="term" value="C:chloroplast"/>
    <property type="evidence" value="ECO:0007669"/>
    <property type="project" value="UniProtKB-SubCell"/>
</dbReference>
<dbReference type="GO" id="GO:0003723">
    <property type="term" value="F:RNA binding"/>
    <property type="evidence" value="ECO:0007669"/>
    <property type="project" value="UniProtKB-KW"/>
</dbReference>
<dbReference type="GO" id="GO:0006397">
    <property type="term" value="P:mRNA processing"/>
    <property type="evidence" value="ECO:0007669"/>
    <property type="project" value="UniProtKB-KW"/>
</dbReference>
<dbReference type="GO" id="GO:0008380">
    <property type="term" value="P:RNA splicing"/>
    <property type="evidence" value="ECO:0007669"/>
    <property type="project" value="UniProtKB-UniRule"/>
</dbReference>
<dbReference type="GO" id="GO:0008033">
    <property type="term" value="P:tRNA processing"/>
    <property type="evidence" value="ECO:0007669"/>
    <property type="project" value="UniProtKB-KW"/>
</dbReference>
<dbReference type="HAMAP" id="MF_01390">
    <property type="entry name" value="MatK"/>
    <property type="match status" value="1"/>
</dbReference>
<dbReference type="InterPro" id="IPR024937">
    <property type="entry name" value="Domain_X"/>
</dbReference>
<dbReference type="InterPro" id="IPR002866">
    <property type="entry name" value="Maturase_MatK"/>
</dbReference>
<dbReference type="InterPro" id="IPR024942">
    <property type="entry name" value="Maturase_MatK_N"/>
</dbReference>
<dbReference type="PANTHER" id="PTHR34811">
    <property type="entry name" value="MATURASE K"/>
    <property type="match status" value="1"/>
</dbReference>
<dbReference type="PANTHER" id="PTHR34811:SF1">
    <property type="entry name" value="MATURASE K"/>
    <property type="match status" value="1"/>
</dbReference>
<dbReference type="Pfam" id="PF01348">
    <property type="entry name" value="Intron_maturas2"/>
    <property type="match status" value="1"/>
</dbReference>
<dbReference type="Pfam" id="PF01824">
    <property type="entry name" value="MatK_N"/>
    <property type="match status" value="1"/>
</dbReference>